<evidence type="ECO:0000255" key="1">
    <source>
        <dbReference type="HAMAP-Rule" id="MF_00484"/>
    </source>
</evidence>
<keyword id="KW-0320">Glycogen biosynthesis</keyword>
<keyword id="KW-0328">Glycosyltransferase</keyword>
<keyword id="KW-0808">Transferase</keyword>
<organism>
    <name type="scientific">Mesorhizobium japonicum (strain LMG 29417 / CECT 9101 / MAFF 303099)</name>
    <name type="common">Mesorhizobium loti (strain MAFF 303099)</name>
    <dbReference type="NCBI Taxonomy" id="266835"/>
    <lineage>
        <taxon>Bacteria</taxon>
        <taxon>Pseudomonadati</taxon>
        <taxon>Pseudomonadota</taxon>
        <taxon>Alphaproteobacteria</taxon>
        <taxon>Hyphomicrobiales</taxon>
        <taxon>Phyllobacteriaceae</taxon>
        <taxon>Mesorhizobium</taxon>
    </lineage>
</organism>
<protein>
    <recommendedName>
        <fullName evidence="1">Glycogen synthase</fullName>
        <ecNumber evidence="1">2.4.1.21</ecNumber>
    </recommendedName>
    <alternativeName>
        <fullName evidence="1">Starch [bacterial glycogen] synthase</fullName>
    </alternativeName>
</protein>
<proteinExistence type="inferred from homology"/>
<sequence>MQVLSVTPEIFPLIKTGGLADVTGALPVALAAKGVTMRTLIPGFPAVMEGFKKRKAVYQYPLLQGGKASIHAVQIAGLDLFVLDAPHLFDRPGGPYGNASGADWPDNWRRFAALSQAGADIAGGAISGYLPEIVHAHDWQSAMTLAYMRYGKAVGTPSMMTVHNLAFQGQFGAGIFGELGLPAVAMALDGVEYYGGVGFLKAGLQAAWAITTVSPTYAQEIRSPEFGMGLDGLINMRSSDLYGIVNGIDTAIWDPETDKHLVSNYTATTLKARAPNRAAVEERFGLDRDDSPIVCVISRLTWQKGMDILATVIDGIVATGARLAILGSGDAGLEGALLAAAARHRGRIGVVIGYDEGLSHTMQGGCDAIIIPSRFEPCGLTQLYGLRYGCVPVVARTGGLADTIIDANEAAMAAGVATGLQFAPNNGGAMLHAIRRLVDAYADPAAFETIQRQGMKADVSWDKSAEKYLELYRLLLSKRVA</sequence>
<comment type="function">
    <text evidence="1">Synthesizes alpha-1,4-glucan chains using ADP-glucose.</text>
</comment>
<comment type="catalytic activity">
    <reaction evidence="1">
        <text>[(1-&gt;4)-alpha-D-glucosyl](n) + ADP-alpha-D-glucose = [(1-&gt;4)-alpha-D-glucosyl](n+1) + ADP + H(+)</text>
        <dbReference type="Rhea" id="RHEA:18189"/>
        <dbReference type="Rhea" id="RHEA-COMP:9584"/>
        <dbReference type="Rhea" id="RHEA-COMP:9587"/>
        <dbReference type="ChEBI" id="CHEBI:15378"/>
        <dbReference type="ChEBI" id="CHEBI:15444"/>
        <dbReference type="ChEBI" id="CHEBI:57498"/>
        <dbReference type="ChEBI" id="CHEBI:456216"/>
        <dbReference type="EC" id="2.4.1.21"/>
    </reaction>
</comment>
<comment type="pathway">
    <text evidence="1">Glycan biosynthesis; glycogen biosynthesis.</text>
</comment>
<comment type="similarity">
    <text evidence="1">Belongs to the glycosyltransferase 1 family. Bacterial/plant glycogen synthase subfamily.</text>
</comment>
<dbReference type="EC" id="2.4.1.21" evidence="1"/>
<dbReference type="EMBL" id="BA000012">
    <property type="protein sequence ID" value="BAB54020.1"/>
    <property type="molecule type" value="Genomic_DNA"/>
</dbReference>
<dbReference type="RefSeq" id="WP_010914968.1">
    <property type="nucleotide sequence ID" value="NC_002678.2"/>
</dbReference>
<dbReference type="SMR" id="Q985P2"/>
<dbReference type="CAZy" id="GT5">
    <property type="family name" value="Glycosyltransferase Family 5"/>
</dbReference>
<dbReference type="GeneID" id="66685155"/>
<dbReference type="KEGG" id="mlo:mlr7589"/>
<dbReference type="eggNOG" id="COG0297">
    <property type="taxonomic scope" value="Bacteria"/>
</dbReference>
<dbReference type="HOGENOM" id="CLU_009583_18_4_5"/>
<dbReference type="UniPathway" id="UPA00164"/>
<dbReference type="Proteomes" id="UP000000552">
    <property type="component" value="Chromosome"/>
</dbReference>
<dbReference type="GO" id="GO:0005829">
    <property type="term" value="C:cytosol"/>
    <property type="evidence" value="ECO:0007669"/>
    <property type="project" value="TreeGrafter"/>
</dbReference>
<dbReference type="GO" id="GO:0009011">
    <property type="term" value="F:alpha-1,4-glucan glucosyltransferase (ADP-glucose donor) activity"/>
    <property type="evidence" value="ECO:0007669"/>
    <property type="project" value="UniProtKB-UniRule"/>
</dbReference>
<dbReference type="GO" id="GO:0004373">
    <property type="term" value="F:alpha-1,4-glucan glucosyltransferase (UDP-glucose donor) activity"/>
    <property type="evidence" value="ECO:0007669"/>
    <property type="project" value="InterPro"/>
</dbReference>
<dbReference type="GO" id="GO:0005978">
    <property type="term" value="P:glycogen biosynthetic process"/>
    <property type="evidence" value="ECO:0007669"/>
    <property type="project" value="UniProtKB-UniRule"/>
</dbReference>
<dbReference type="CDD" id="cd03791">
    <property type="entry name" value="GT5_Glycogen_synthase_DULL1-like"/>
    <property type="match status" value="1"/>
</dbReference>
<dbReference type="Gene3D" id="3.40.50.2000">
    <property type="entry name" value="Glycogen Phosphorylase B"/>
    <property type="match status" value="2"/>
</dbReference>
<dbReference type="HAMAP" id="MF_00484">
    <property type="entry name" value="Glycogen_synth"/>
    <property type="match status" value="1"/>
</dbReference>
<dbReference type="InterPro" id="IPR001296">
    <property type="entry name" value="Glyco_trans_1"/>
</dbReference>
<dbReference type="InterPro" id="IPR011835">
    <property type="entry name" value="GS/SS"/>
</dbReference>
<dbReference type="InterPro" id="IPR013534">
    <property type="entry name" value="Starch_synth_cat_dom"/>
</dbReference>
<dbReference type="NCBIfam" id="TIGR02095">
    <property type="entry name" value="glgA"/>
    <property type="match status" value="1"/>
</dbReference>
<dbReference type="NCBIfam" id="NF001899">
    <property type="entry name" value="PRK00654.1-2"/>
    <property type="match status" value="1"/>
</dbReference>
<dbReference type="PANTHER" id="PTHR45825:SF11">
    <property type="entry name" value="ALPHA AMYLASE DOMAIN-CONTAINING PROTEIN"/>
    <property type="match status" value="1"/>
</dbReference>
<dbReference type="PANTHER" id="PTHR45825">
    <property type="entry name" value="GRANULE-BOUND STARCH SYNTHASE 1, CHLOROPLASTIC/AMYLOPLASTIC"/>
    <property type="match status" value="1"/>
</dbReference>
<dbReference type="Pfam" id="PF08323">
    <property type="entry name" value="Glyco_transf_5"/>
    <property type="match status" value="1"/>
</dbReference>
<dbReference type="Pfam" id="PF00534">
    <property type="entry name" value="Glycos_transf_1"/>
    <property type="match status" value="1"/>
</dbReference>
<dbReference type="SUPFAM" id="SSF53756">
    <property type="entry name" value="UDP-Glycosyltransferase/glycogen phosphorylase"/>
    <property type="match status" value="1"/>
</dbReference>
<feature type="chain" id="PRO_0000188636" description="Glycogen synthase">
    <location>
        <begin position="1"/>
        <end position="481"/>
    </location>
</feature>
<feature type="binding site" evidence="1">
    <location>
        <position position="15"/>
    </location>
    <ligand>
        <name>ADP-alpha-D-glucose</name>
        <dbReference type="ChEBI" id="CHEBI:57498"/>
    </ligand>
</feature>
<gene>
    <name evidence="1" type="primary">glgA</name>
    <name type="ordered locus">mlr7589</name>
</gene>
<name>GLGA_RHILO</name>
<reference key="1">
    <citation type="journal article" date="2000" name="DNA Res.">
        <title>Complete genome structure of the nitrogen-fixing symbiotic bacterium Mesorhizobium loti.</title>
        <authorList>
            <person name="Kaneko T."/>
            <person name="Nakamura Y."/>
            <person name="Sato S."/>
            <person name="Asamizu E."/>
            <person name="Kato T."/>
            <person name="Sasamoto S."/>
            <person name="Watanabe A."/>
            <person name="Idesawa K."/>
            <person name="Ishikawa A."/>
            <person name="Kawashima K."/>
            <person name="Kimura T."/>
            <person name="Kishida Y."/>
            <person name="Kiyokawa C."/>
            <person name="Kohara M."/>
            <person name="Matsumoto M."/>
            <person name="Matsuno A."/>
            <person name="Mochizuki Y."/>
            <person name="Nakayama S."/>
            <person name="Nakazaki N."/>
            <person name="Shimpo S."/>
            <person name="Sugimoto M."/>
            <person name="Takeuchi C."/>
            <person name="Yamada M."/>
            <person name="Tabata S."/>
        </authorList>
    </citation>
    <scope>NUCLEOTIDE SEQUENCE [LARGE SCALE GENOMIC DNA]</scope>
    <source>
        <strain>LMG 29417 / CECT 9101 / MAFF 303099</strain>
    </source>
</reference>
<accession>Q985P2</accession>